<dbReference type="EMBL" id="CP000356">
    <property type="protein sequence ID" value="ABF54526.1"/>
    <property type="molecule type" value="Genomic_DNA"/>
</dbReference>
<dbReference type="RefSeq" id="WP_011543091.1">
    <property type="nucleotide sequence ID" value="NC_008048.1"/>
</dbReference>
<dbReference type="SMR" id="Q1GP96"/>
<dbReference type="STRING" id="317655.Sala_2821"/>
<dbReference type="KEGG" id="sal:Sala_2821"/>
<dbReference type="eggNOG" id="COG0480">
    <property type="taxonomic scope" value="Bacteria"/>
</dbReference>
<dbReference type="HOGENOM" id="CLU_002794_4_1_5"/>
<dbReference type="OrthoDB" id="9802948at2"/>
<dbReference type="Proteomes" id="UP000006578">
    <property type="component" value="Chromosome"/>
</dbReference>
<dbReference type="GO" id="GO:0005737">
    <property type="term" value="C:cytoplasm"/>
    <property type="evidence" value="ECO:0007669"/>
    <property type="project" value="UniProtKB-SubCell"/>
</dbReference>
<dbReference type="GO" id="GO:0005525">
    <property type="term" value="F:GTP binding"/>
    <property type="evidence" value="ECO:0007669"/>
    <property type="project" value="UniProtKB-UniRule"/>
</dbReference>
<dbReference type="GO" id="GO:0003924">
    <property type="term" value="F:GTPase activity"/>
    <property type="evidence" value="ECO:0007669"/>
    <property type="project" value="InterPro"/>
</dbReference>
<dbReference type="GO" id="GO:0003746">
    <property type="term" value="F:translation elongation factor activity"/>
    <property type="evidence" value="ECO:0007669"/>
    <property type="project" value="UniProtKB-UniRule"/>
</dbReference>
<dbReference type="GO" id="GO:0032790">
    <property type="term" value="P:ribosome disassembly"/>
    <property type="evidence" value="ECO:0007669"/>
    <property type="project" value="TreeGrafter"/>
</dbReference>
<dbReference type="CDD" id="cd01886">
    <property type="entry name" value="EF-G"/>
    <property type="match status" value="1"/>
</dbReference>
<dbReference type="CDD" id="cd16262">
    <property type="entry name" value="EFG_III"/>
    <property type="match status" value="1"/>
</dbReference>
<dbReference type="CDD" id="cd01434">
    <property type="entry name" value="EFG_mtEFG1_IV"/>
    <property type="match status" value="1"/>
</dbReference>
<dbReference type="CDD" id="cd03713">
    <property type="entry name" value="EFG_mtEFG_C"/>
    <property type="match status" value="1"/>
</dbReference>
<dbReference type="CDD" id="cd04088">
    <property type="entry name" value="EFG_mtEFG_II"/>
    <property type="match status" value="1"/>
</dbReference>
<dbReference type="FunFam" id="2.40.30.10:FF:000006">
    <property type="entry name" value="Elongation factor G"/>
    <property type="match status" value="1"/>
</dbReference>
<dbReference type="FunFam" id="3.30.230.10:FF:000003">
    <property type="entry name" value="Elongation factor G"/>
    <property type="match status" value="1"/>
</dbReference>
<dbReference type="FunFam" id="3.30.70.240:FF:000001">
    <property type="entry name" value="Elongation factor G"/>
    <property type="match status" value="1"/>
</dbReference>
<dbReference type="FunFam" id="3.30.70.870:FF:000001">
    <property type="entry name" value="Elongation factor G"/>
    <property type="match status" value="1"/>
</dbReference>
<dbReference type="FunFam" id="3.40.50.300:FF:000029">
    <property type="entry name" value="Elongation factor G"/>
    <property type="match status" value="1"/>
</dbReference>
<dbReference type="Gene3D" id="3.30.230.10">
    <property type="match status" value="1"/>
</dbReference>
<dbReference type="Gene3D" id="3.30.70.240">
    <property type="match status" value="1"/>
</dbReference>
<dbReference type="Gene3D" id="3.30.70.870">
    <property type="entry name" value="Elongation Factor G (Translational Gtpase), domain 3"/>
    <property type="match status" value="1"/>
</dbReference>
<dbReference type="Gene3D" id="3.40.50.300">
    <property type="entry name" value="P-loop containing nucleotide triphosphate hydrolases"/>
    <property type="match status" value="1"/>
</dbReference>
<dbReference type="Gene3D" id="2.40.30.10">
    <property type="entry name" value="Translation factors"/>
    <property type="match status" value="1"/>
</dbReference>
<dbReference type="HAMAP" id="MF_00054_B">
    <property type="entry name" value="EF_G_EF_2_B"/>
    <property type="match status" value="1"/>
</dbReference>
<dbReference type="InterPro" id="IPR053905">
    <property type="entry name" value="EF-G-like_DII"/>
</dbReference>
<dbReference type="InterPro" id="IPR041095">
    <property type="entry name" value="EFG_II"/>
</dbReference>
<dbReference type="InterPro" id="IPR009022">
    <property type="entry name" value="EFG_III"/>
</dbReference>
<dbReference type="InterPro" id="IPR035647">
    <property type="entry name" value="EFG_III/V"/>
</dbReference>
<dbReference type="InterPro" id="IPR047872">
    <property type="entry name" value="EFG_IV"/>
</dbReference>
<dbReference type="InterPro" id="IPR035649">
    <property type="entry name" value="EFG_V"/>
</dbReference>
<dbReference type="InterPro" id="IPR000640">
    <property type="entry name" value="EFG_V-like"/>
</dbReference>
<dbReference type="InterPro" id="IPR031157">
    <property type="entry name" value="G_TR_CS"/>
</dbReference>
<dbReference type="InterPro" id="IPR027417">
    <property type="entry name" value="P-loop_NTPase"/>
</dbReference>
<dbReference type="InterPro" id="IPR020568">
    <property type="entry name" value="Ribosomal_Su5_D2-typ_SF"/>
</dbReference>
<dbReference type="InterPro" id="IPR014721">
    <property type="entry name" value="Ribsml_uS5_D2-typ_fold_subgr"/>
</dbReference>
<dbReference type="InterPro" id="IPR005225">
    <property type="entry name" value="Small_GTP-bd"/>
</dbReference>
<dbReference type="InterPro" id="IPR000795">
    <property type="entry name" value="T_Tr_GTP-bd_dom"/>
</dbReference>
<dbReference type="InterPro" id="IPR009000">
    <property type="entry name" value="Transl_B-barrel_sf"/>
</dbReference>
<dbReference type="InterPro" id="IPR004540">
    <property type="entry name" value="Transl_elong_EFG/EF2"/>
</dbReference>
<dbReference type="InterPro" id="IPR005517">
    <property type="entry name" value="Transl_elong_EFG/EF2_IV"/>
</dbReference>
<dbReference type="NCBIfam" id="TIGR00484">
    <property type="entry name" value="EF-G"/>
    <property type="match status" value="1"/>
</dbReference>
<dbReference type="NCBIfam" id="NF009381">
    <property type="entry name" value="PRK12740.1-5"/>
    <property type="match status" value="1"/>
</dbReference>
<dbReference type="NCBIfam" id="TIGR00231">
    <property type="entry name" value="small_GTP"/>
    <property type="match status" value="1"/>
</dbReference>
<dbReference type="PANTHER" id="PTHR43261:SF1">
    <property type="entry name" value="RIBOSOME-RELEASING FACTOR 2, MITOCHONDRIAL"/>
    <property type="match status" value="1"/>
</dbReference>
<dbReference type="PANTHER" id="PTHR43261">
    <property type="entry name" value="TRANSLATION ELONGATION FACTOR G-RELATED"/>
    <property type="match status" value="1"/>
</dbReference>
<dbReference type="Pfam" id="PF22042">
    <property type="entry name" value="EF-G_D2"/>
    <property type="match status" value="1"/>
</dbReference>
<dbReference type="Pfam" id="PF00679">
    <property type="entry name" value="EFG_C"/>
    <property type="match status" value="1"/>
</dbReference>
<dbReference type="Pfam" id="PF14492">
    <property type="entry name" value="EFG_III"/>
    <property type="match status" value="1"/>
</dbReference>
<dbReference type="Pfam" id="PF03764">
    <property type="entry name" value="EFG_IV"/>
    <property type="match status" value="1"/>
</dbReference>
<dbReference type="Pfam" id="PF00009">
    <property type="entry name" value="GTP_EFTU"/>
    <property type="match status" value="1"/>
</dbReference>
<dbReference type="PRINTS" id="PR00315">
    <property type="entry name" value="ELONGATNFCT"/>
</dbReference>
<dbReference type="SMART" id="SM00838">
    <property type="entry name" value="EFG_C"/>
    <property type="match status" value="1"/>
</dbReference>
<dbReference type="SMART" id="SM00889">
    <property type="entry name" value="EFG_IV"/>
    <property type="match status" value="1"/>
</dbReference>
<dbReference type="SUPFAM" id="SSF54980">
    <property type="entry name" value="EF-G C-terminal domain-like"/>
    <property type="match status" value="2"/>
</dbReference>
<dbReference type="SUPFAM" id="SSF52540">
    <property type="entry name" value="P-loop containing nucleoside triphosphate hydrolases"/>
    <property type="match status" value="1"/>
</dbReference>
<dbReference type="SUPFAM" id="SSF54211">
    <property type="entry name" value="Ribosomal protein S5 domain 2-like"/>
    <property type="match status" value="1"/>
</dbReference>
<dbReference type="SUPFAM" id="SSF50447">
    <property type="entry name" value="Translation proteins"/>
    <property type="match status" value="1"/>
</dbReference>
<dbReference type="PROSITE" id="PS00301">
    <property type="entry name" value="G_TR_1"/>
    <property type="match status" value="1"/>
</dbReference>
<dbReference type="PROSITE" id="PS51722">
    <property type="entry name" value="G_TR_2"/>
    <property type="match status" value="1"/>
</dbReference>
<accession>Q1GP96</accession>
<keyword id="KW-0963">Cytoplasm</keyword>
<keyword id="KW-0251">Elongation factor</keyword>
<keyword id="KW-0342">GTP-binding</keyword>
<keyword id="KW-0547">Nucleotide-binding</keyword>
<keyword id="KW-0648">Protein biosynthesis</keyword>
<keyword id="KW-1185">Reference proteome</keyword>
<sequence>MARSHPLERYRNFGIMAHIDAGKTTTTERILYYTGKSYKIGEVHDGAATMDWMEQEQERGITITSAATTCLWKADEGKGPEHRLNIIDTPGHVDFTIEVERSLRVLDGAVAAFDGVAGVEPQSETVWRQADKYKVPRMCFINKLDRTGANFYYCVQTIIDRLGATPAVLYLPIGAESDFKGLVDLVNERAIIWKDESLGAEFFYEDIPADLADKAAEYREKLVELAVEQDDEAMEAYLEGNVPDVATLKKLIRKGTLNQAFVPVLCGSAFKNKGVQPLLDAVVDYLPSPLDIPDVQGINPTTEQPDSRATSDSAPLSMLAFKIMNDPFVGSLTFARIYSGTLTKGSYLNSVKDKKEKIGRMLLMHANSREDIEEAFAGDIVALAGLKETTTGDTLCASNAPIILERMEFPEPVIELSVEPKTKADQEKMGIALSRLAAEDPSFRVSTDHESGQTIIKGMGELHLDILVDRMKREFKVEANVGAPQVAYRESLAKPVDVDYTHKKQSGGSGQFGRVKVSVAPGERGSGITFIDEIKGGNIPREYIPSVEKGMREAAENGHMIGFPIIDFEIRLTDGAYHDVDSSALAFEIAGRAAMREVAAKAGIKLLEPVMKVEVVTPEEFMGDVIGDLNSRRGQIQGTDSRGNAQVVEAMVPLANMFGYVNQLRSFTQGRAQYTMQFSHYEEVPNNVAEEVKAKMA</sequence>
<protein>
    <recommendedName>
        <fullName evidence="1">Elongation factor G</fullName>
        <shortName evidence="1">EF-G</shortName>
    </recommendedName>
</protein>
<reference key="1">
    <citation type="journal article" date="2009" name="Proc. Natl. Acad. Sci. U.S.A.">
        <title>The genomic basis of trophic strategy in marine bacteria.</title>
        <authorList>
            <person name="Lauro F.M."/>
            <person name="McDougald D."/>
            <person name="Thomas T."/>
            <person name="Williams T.J."/>
            <person name="Egan S."/>
            <person name="Rice S."/>
            <person name="DeMaere M.Z."/>
            <person name="Ting L."/>
            <person name="Ertan H."/>
            <person name="Johnson J."/>
            <person name="Ferriera S."/>
            <person name="Lapidus A."/>
            <person name="Anderson I."/>
            <person name="Kyrpides N."/>
            <person name="Munk A.C."/>
            <person name="Detter C."/>
            <person name="Han C.S."/>
            <person name="Brown M.V."/>
            <person name="Robb F.T."/>
            <person name="Kjelleberg S."/>
            <person name="Cavicchioli R."/>
        </authorList>
    </citation>
    <scope>NUCLEOTIDE SEQUENCE [LARGE SCALE GENOMIC DNA]</scope>
    <source>
        <strain>DSM 13593 / LMG 18877 / RB2256</strain>
    </source>
</reference>
<gene>
    <name evidence="1" type="primary">fusA</name>
    <name type="ordered locus">Sala_2821</name>
</gene>
<proteinExistence type="inferred from homology"/>
<organism>
    <name type="scientific">Sphingopyxis alaskensis (strain DSM 13593 / LMG 18877 / RB2256)</name>
    <name type="common">Sphingomonas alaskensis</name>
    <dbReference type="NCBI Taxonomy" id="317655"/>
    <lineage>
        <taxon>Bacteria</taxon>
        <taxon>Pseudomonadati</taxon>
        <taxon>Pseudomonadota</taxon>
        <taxon>Alphaproteobacteria</taxon>
        <taxon>Sphingomonadales</taxon>
        <taxon>Sphingomonadaceae</taxon>
        <taxon>Sphingopyxis</taxon>
    </lineage>
</organism>
<name>EFG_SPHAL</name>
<feature type="chain" id="PRO_0000263513" description="Elongation factor G">
    <location>
        <begin position="1"/>
        <end position="697"/>
    </location>
</feature>
<feature type="domain" description="tr-type G">
    <location>
        <begin position="8"/>
        <end position="290"/>
    </location>
</feature>
<feature type="binding site" evidence="1">
    <location>
        <begin position="17"/>
        <end position="24"/>
    </location>
    <ligand>
        <name>GTP</name>
        <dbReference type="ChEBI" id="CHEBI:37565"/>
    </ligand>
</feature>
<feature type="binding site" evidence="1">
    <location>
        <begin position="88"/>
        <end position="92"/>
    </location>
    <ligand>
        <name>GTP</name>
        <dbReference type="ChEBI" id="CHEBI:37565"/>
    </ligand>
</feature>
<feature type="binding site" evidence="1">
    <location>
        <begin position="142"/>
        <end position="145"/>
    </location>
    <ligand>
        <name>GTP</name>
        <dbReference type="ChEBI" id="CHEBI:37565"/>
    </ligand>
</feature>
<comment type="function">
    <text evidence="1">Catalyzes the GTP-dependent ribosomal translocation step during translation elongation. During this step, the ribosome changes from the pre-translocational (PRE) to the post-translocational (POST) state as the newly formed A-site-bound peptidyl-tRNA and P-site-bound deacylated tRNA move to the P and E sites, respectively. Catalyzes the coordinated movement of the two tRNA molecules, the mRNA and conformational changes in the ribosome.</text>
</comment>
<comment type="subcellular location">
    <subcellularLocation>
        <location evidence="1">Cytoplasm</location>
    </subcellularLocation>
</comment>
<comment type="similarity">
    <text evidence="1">Belongs to the TRAFAC class translation factor GTPase superfamily. Classic translation factor GTPase family. EF-G/EF-2 subfamily.</text>
</comment>
<evidence type="ECO:0000255" key="1">
    <source>
        <dbReference type="HAMAP-Rule" id="MF_00054"/>
    </source>
</evidence>